<accession>Q9RTP8</accession>
<name>MNTH_DEIRA</name>
<comment type="function">
    <text evidence="1">H(+)-stimulated, divalent metal cation uptake system.</text>
</comment>
<comment type="subcellular location">
    <subcellularLocation>
        <location evidence="1">Cell membrane</location>
        <topology evidence="1">Multi-pass membrane protein</topology>
    </subcellularLocation>
</comment>
<comment type="similarity">
    <text evidence="1">Belongs to the NRAMP family.</text>
</comment>
<sequence>MDSRSPSLPDDRPDPPEQHLDARAGATLRGTAGPRGVRRILPFLGPAVIASIAYMDPGNFATNIEGGARYGYSLLWVILAANLMAMVIQNLSANLGIASGRNLPELIRERWPRPLVWFYWIQAELVAMATDLAEFLGAALAIQLLTGLPMFWGAVVTGVVTFWLLNLQKRGTRPLELAVGAFVLMIGVAYLVQVVLARPDLAAVGAGFVPRLQGPGSAYLAVGIIGATVMPHVIYLHSALTQGRIQTDTTEEKRRLVRLNRVDVIAAMGLAGLINMSMLAVAAATFHGKNVENAGDLTTAYQTLTPLLGPAASVLFAVALLASGLSSSAVGTMAGDVIMQGFMGFHIPLWLRRLITMLPAFIVILLGMDPSSVLILSQVILCFGVPFALVPLLLFTARRDVMGALVTRRSFTVIGWVIAVIIIALNGYLLWELLGG</sequence>
<protein>
    <recommendedName>
        <fullName evidence="1">Divalent metal cation transporter MntH</fullName>
    </recommendedName>
</protein>
<reference key="1">
    <citation type="journal article" date="1999" name="Science">
        <title>Genome sequence of the radioresistant bacterium Deinococcus radiodurans R1.</title>
        <authorList>
            <person name="White O."/>
            <person name="Eisen J.A."/>
            <person name="Heidelberg J.F."/>
            <person name="Hickey E.K."/>
            <person name="Peterson J.D."/>
            <person name="Dodson R.J."/>
            <person name="Haft D.H."/>
            <person name="Gwinn M.L."/>
            <person name="Nelson W.C."/>
            <person name="Richardson D.L."/>
            <person name="Moffat K.S."/>
            <person name="Qin H."/>
            <person name="Jiang L."/>
            <person name="Pamphile W."/>
            <person name="Crosby M."/>
            <person name="Shen M."/>
            <person name="Vamathevan J.J."/>
            <person name="Lam P."/>
            <person name="McDonald L.A."/>
            <person name="Utterback T.R."/>
            <person name="Zalewski C."/>
            <person name="Makarova K.S."/>
            <person name="Aravind L."/>
            <person name="Daly M.J."/>
            <person name="Minton K.W."/>
            <person name="Fleischmann R.D."/>
            <person name="Ketchum K.A."/>
            <person name="Nelson K.E."/>
            <person name="Salzberg S.L."/>
            <person name="Smith H.O."/>
            <person name="Venter J.C."/>
            <person name="Fraser C.M."/>
        </authorList>
    </citation>
    <scope>NUCLEOTIDE SEQUENCE [LARGE SCALE GENOMIC DNA]</scope>
    <source>
        <strain>ATCC 13939 / DSM 20539 / JCM 16871 / CCUG 27074 / LMG 4051 / NBRC 15346 / NCIMB 9279 / VKM B-1422 / R1</strain>
    </source>
</reference>
<dbReference type="EMBL" id="AE000513">
    <property type="protein sequence ID" value="AAF11265.1"/>
    <property type="molecule type" value="Genomic_DNA"/>
</dbReference>
<dbReference type="PIR" id="G75363">
    <property type="entry name" value="G75363"/>
</dbReference>
<dbReference type="RefSeq" id="NP_295432.1">
    <property type="nucleotide sequence ID" value="NC_001263.1"/>
</dbReference>
<dbReference type="RefSeq" id="WP_010888344.1">
    <property type="nucleotide sequence ID" value="NZ_JHYL01000032.1"/>
</dbReference>
<dbReference type="PDB" id="5KTE">
    <property type="method" value="X-ray"/>
    <property type="resolution" value="3.94 A"/>
    <property type="chains" value="A=26-436"/>
</dbReference>
<dbReference type="PDB" id="6C3I">
    <property type="method" value="X-ray"/>
    <property type="resolution" value="2.95 A"/>
    <property type="chains" value="A/B=1-436"/>
</dbReference>
<dbReference type="PDB" id="6D91">
    <property type="method" value="X-ray"/>
    <property type="resolution" value="2.36 A"/>
    <property type="chains" value="A=35-436"/>
</dbReference>
<dbReference type="PDB" id="6D9W">
    <property type="method" value="X-ray"/>
    <property type="resolution" value="3.94 A"/>
    <property type="chains" value="A=26-436"/>
</dbReference>
<dbReference type="PDB" id="8E5S">
    <property type="method" value="X-ray"/>
    <property type="resolution" value="2.38 A"/>
    <property type="chains" value="A=32-436"/>
</dbReference>
<dbReference type="PDB" id="8E5V">
    <property type="method" value="X-ray"/>
    <property type="resolution" value="2.36 A"/>
    <property type="chains" value="A=32-436"/>
</dbReference>
<dbReference type="PDB" id="8E60">
    <property type="method" value="X-ray"/>
    <property type="resolution" value="2.38 A"/>
    <property type="chains" value="A=32-436"/>
</dbReference>
<dbReference type="PDB" id="8E6H">
    <property type="method" value="X-ray"/>
    <property type="resolution" value="2.39 A"/>
    <property type="chains" value="A=1-436"/>
</dbReference>
<dbReference type="PDB" id="8E6I">
    <property type="method" value="X-ray"/>
    <property type="resolution" value="2.52 A"/>
    <property type="chains" value="A=32-436"/>
</dbReference>
<dbReference type="PDB" id="8E6L">
    <property type="method" value="X-ray"/>
    <property type="resolution" value="3.12 A"/>
    <property type="chains" value="A=32-436"/>
</dbReference>
<dbReference type="PDB" id="8E6M">
    <property type="method" value="X-ray"/>
    <property type="resolution" value="2.48 A"/>
    <property type="chains" value="A=32-436"/>
</dbReference>
<dbReference type="PDB" id="8E6N">
    <property type="method" value="X-ray"/>
    <property type="resolution" value="2.40 A"/>
    <property type="chains" value="A=35-436"/>
</dbReference>
<dbReference type="PDBsum" id="5KTE"/>
<dbReference type="PDBsum" id="6C3I"/>
<dbReference type="PDBsum" id="6D91"/>
<dbReference type="PDBsum" id="6D9W"/>
<dbReference type="PDBsum" id="8E5S"/>
<dbReference type="PDBsum" id="8E5V"/>
<dbReference type="PDBsum" id="8E60"/>
<dbReference type="PDBsum" id="8E6H"/>
<dbReference type="PDBsum" id="8E6I"/>
<dbReference type="PDBsum" id="8E6L"/>
<dbReference type="PDBsum" id="8E6M"/>
<dbReference type="PDBsum" id="8E6N"/>
<dbReference type="SMR" id="Q9RTP8"/>
<dbReference type="FunCoup" id="Q9RTP8">
    <property type="interactions" value="321"/>
</dbReference>
<dbReference type="STRING" id="243230.DR_1709"/>
<dbReference type="TCDB" id="2.A.55.3.7">
    <property type="family name" value="the metal ion (mn(2+)-iron) transporter (nramp) family"/>
</dbReference>
<dbReference type="PaxDb" id="243230-DR_1709"/>
<dbReference type="ABCD" id="Q9RTP8">
    <property type="antibodies" value="1 sequenced antibody"/>
</dbReference>
<dbReference type="EnsemblBacteria" id="AAF11265">
    <property type="protein sequence ID" value="AAF11265"/>
    <property type="gene ID" value="DR_1709"/>
</dbReference>
<dbReference type="KEGG" id="dra:DR_1709"/>
<dbReference type="PATRIC" id="fig|243230.17.peg.1920"/>
<dbReference type="eggNOG" id="COG1914">
    <property type="taxonomic scope" value="Bacteria"/>
</dbReference>
<dbReference type="HOGENOM" id="CLU_020088_2_0_0"/>
<dbReference type="InParanoid" id="Q9RTP8"/>
<dbReference type="OrthoDB" id="9787548at2"/>
<dbReference type="Proteomes" id="UP000002524">
    <property type="component" value="Chromosome 1"/>
</dbReference>
<dbReference type="GO" id="GO:0005886">
    <property type="term" value="C:plasma membrane"/>
    <property type="evidence" value="ECO:0000318"/>
    <property type="project" value="GO_Central"/>
</dbReference>
<dbReference type="GO" id="GO:0015086">
    <property type="term" value="F:cadmium ion transmembrane transporter activity"/>
    <property type="evidence" value="ECO:0000318"/>
    <property type="project" value="GO_Central"/>
</dbReference>
<dbReference type="GO" id="GO:0005384">
    <property type="term" value="F:manganese ion transmembrane transporter activity"/>
    <property type="evidence" value="ECO:0000318"/>
    <property type="project" value="GO_Central"/>
</dbReference>
<dbReference type="GO" id="GO:0046872">
    <property type="term" value="F:metal ion binding"/>
    <property type="evidence" value="ECO:0007669"/>
    <property type="project" value="UniProtKB-UniRule"/>
</dbReference>
<dbReference type="GO" id="GO:0015293">
    <property type="term" value="F:symporter activity"/>
    <property type="evidence" value="ECO:0007669"/>
    <property type="project" value="UniProtKB-UniRule"/>
</dbReference>
<dbReference type="GO" id="GO:0034755">
    <property type="term" value="P:iron ion transmembrane transport"/>
    <property type="evidence" value="ECO:0000318"/>
    <property type="project" value="GO_Central"/>
</dbReference>
<dbReference type="GO" id="GO:0006828">
    <property type="term" value="P:manganese ion transport"/>
    <property type="evidence" value="ECO:0000318"/>
    <property type="project" value="GO_Central"/>
</dbReference>
<dbReference type="HAMAP" id="MF_00221">
    <property type="entry name" value="NRAMP"/>
    <property type="match status" value="1"/>
</dbReference>
<dbReference type="InterPro" id="IPR001046">
    <property type="entry name" value="NRAMP_fam"/>
</dbReference>
<dbReference type="NCBIfam" id="TIGR01197">
    <property type="entry name" value="nramp"/>
    <property type="match status" value="1"/>
</dbReference>
<dbReference type="NCBIfam" id="NF037982">
    <property type="entry name" value="Nramp_1"/>
    <property type="match status" value="1"/>
</dbReference>
<dbReference type="NCBIfam" id="NF001923">
    <property type="entry name" value="PRK00701.1"/>
    <property type="match status" value="1"/>
</dbReference>
<dbReference type="PANTHER" id="PTHR11706:SF33">
    <property type="entry name" value="NATURAL RESISTANCE-ASSOCIATED MACROPHAGE PROTEIN 2"/>
    <property type="match status" value="1"/>
</dbReference>
<dbReference type="PANTHER" id="PTHR11706">
    <property type="entry name" value="SOLUTE CARRIER PROTEIN FAMILY 11 MEMBER"/>
    <property type="match status" value="1"/>
</dbReference>
<dbReference type="Pfam" id="PF01566">
    <property type="entry name" value="Nramp"/>
    <property type="match status" value="1"/>
</dbReference>
<dbReference type="PRINTS" id="PR00447">
    <property type="entry name" value="NATRESASSCMP"/>
</dbReference>
<organism>
    <name type="scientific">Deinococcus radiodurans (strain ATCC 13939 / DSM 20539 / JCM 16871 / CCUG 27074 / LMG 4051 / NBRC 15346 / NCIMB 9279 / VKM B-1422 / R1)</name>
    <dbReference type="NCBI Taxonomy" id="243230"/>
    <lineage>
        <taxon>Bacteria</taxon>
        <taxon>Thermotogati</taxon>
        <taxon>Deinococcota</taxon>
        <taxon>Deinococci</taxon>
        <taxon>Deinococcales</taxon>
        <taxon>Deinococcaceae</taxon>
        <taxon>Deinococcus</taxon>
    </lineage>
</organism>
<keyword id="KW-0002">3D-structure</keyword>
<keyword id="KW-1003">Cell membrane</keyword>
<keyword id="KW-0406">Ion transport</keyword>
<keyword id="KW-0472">Membrane</keyword>
<keyword id="KW-1185">Reference proteome</keyword>
<keyword id="KW-0769">Symport</keyword>
<keyword id="KW-0812">Transmembrane</keyword>
<keyword id="KW-1133">Transmembrane helix</keyword>
<keyword id="KW-0813">Transport</keyword>
<evidence type="ECO:0000255" key="1">
    <source>
        <dbReference type="HAMAP-Rule" id="MF_00221"/>
    </source>
</evidence>
<evidence type="ECO:0000256" key="2">
    <source>
        <dbReference type="SAM" id="MobiDB-lite"/>
    </source>
</evidence>
<evidence type="ECO:0007829" key="3">
    <source>
        <dbReference type="PDB" id="6D91"/>
    </source>
</evidence>
<evidence type="ECO:0007829" key="4">
    <source>
        <dbReference type="PDB" id="8E5V"/>
    </source>
</evidence>
<evidence type="ECO:0007829" key="5">
    <source>
        <dbReference type="PDB" id="8E6N"/>
    </source>
</evidence>
<feature type="chain" id="PRO_0000212616" description="Divalent metal cation transporter MntH">
    <location>
        <begin position="1"/>
        <end position="436"/>
    </location>
</feature>
<feature type="transmembrane region" description="Helical" evidence="1">
    <location>
        <begin position="40"/>
        <end position="60"/>
    </location>
</feature>
<feature type="transmembrane region" description="Helical" evidence="1">
    <location>
        <begin position="71"/>
        <end position="91"/>
    </location>
</feature>
<feature type="transmembrane region" description="Helical" evidence="1">
    <location>
        <begin position="115"/>
        <end position="135"/>
    </location>
</feature>
<feature type="transmembrane region" description="Helical" evidence="1">
    <location>
        <begin position="144"/>
        <end position="164"/>
    </location>
</feature>
<feature type="transmembrane region" description="Helical" evidence="1">
    <location>
        <begin position="177"/>
        <end position="197"/>
    </location>
</feature>
<feature type="transmembrane region" description="Helical" evidence="1">
    <location>
        <begin position="216"/>
        <end position="236"/>
    </location>
</feature>
<feature type="transmembrane region" description="Helical" evidence="1">
    <location>
        <begin position="264"/>
        <end position="284"/>
    </location>
</feature>
<feature type="transmembrane region" description="Helical" evidence="1">
    <location>
        <begin position="304"/>
        <end position="324"/>
    </location>
</feature>
<feature type="transmembrane region" description="Helical" evidence="1">
    <location>
        <begin position="354"/>
        <end position="374"/>
    </location>
</feature>
<feature type="transmembrane region" description="Helical" evidence="1">
    <location>
        <begin position="375"/>
        <end position="395"/>
    </location>
</feature>
<feature type="transmembrane region" description="Helical" evidence="1">
    <location>
        <begin position="411"/>
        <end position="431"/>
    </location>
</feature>
<feature type="region of interest" description="Disordered" evidence="2">
    <location>
        <begin position="1"/>
        <end position="31"/>
    </location>
</feature>
<feature type="compositionally biased region" description="Basic and acidic residues" evidence="2">
    <location>
        <begin position="1"/>
        <end position="22"/>
    </location>
</feature>
<feature type="helix" evidence="3">
    <location>
        <begin position="44"/>
        <end position="51"/>
    </location>
</feature>
<feature type="helix" evidence="3">
    <location>
        <begin position="52"/>
        <end position="55"/>
    </location>
</feature>
<feature type="helix" evidence="3">
    <location>
        <begin position="57"/>
        <end position="70"/>
    </location>
</feature>
<feature type="turn" evidence="3">
    <location>
        <begin position="71"/>
        <end position="74"/>
    </location>
</feature>
<feature type="helix" evidence="3">
    <location>
        <begin position="75"/>
        <end position="99"/>
    </location>
</feature>
<feature type="helix" evidence="3">
    <location>
        <begin position="103"/>
        <end position="110"/>
    </location>
</feature>
<feature type="helix" evidence="3">
    <location>
        <begin position="113"/>
        <end position="146"/>
    </location>
</feature>
<feature type="helix" evidence="3">
    <location>
        <begin position="150"/>
        <end position="163"/>
    </location>
</feature>
<feature type="helix" evidence="3">
    <location>
        <begin position="166"/>
        <end position="169"/>
    </location>
</feature>
<feature type="helix" evidence="3">
    <location>
        <begin position="173"/>
        <end position="197"/>
    </location>
</feature>
<feature type="helix" evidence="3">
    <location>
        <begin position="201"/>
        <end position="206"/>
    </location>
</feature>
<feature type="helix" evidence="3">
    <location>
        <begin position="217"/>
        <end position="226"/>
    </location>
</feature>
<feature type="helix" evidence="3">
    <location>
        <begin position="231"/>
        <end position="241"/>
    </location>
</feature>
<feature type="strand" evidence="5">
    <location>
        <begin position="248"/>
        <end position="250"/>
    </location>
</feature>
<feature type="helix" evidence="3">
    <location>
        <begin position="251"/>
        <end position="286"/>
    </location>
</feature>
<feature type="turn" evidence="3">
    <location>
        <begin position="287"/>
        <end position="290"/>
    </location>
</feature>
<feature type="turn" evidence="4">
    <location>
        <begin position="292"/>
        <end position="295"/>
    </location>
</feature>
<feature type="helix" evidence="3">
    <location>
        <begin position="297"/>
        <end position="307"/>
    </location>
</feature>
<feature type="helix" evidence="3">
    <location>
        <begin position="310"/>
        <end position="342"/>
    </location>
</feature>
<feature type="helix" evidence="3">
    <location>
        <begin position="349"/>
        <end position="366"/>
    </location>
</feature>
<feature type="helix" evidence="3">
    <location>
        <begin position="370"/>
        <end position="395"/>
    </location>
</feature>
<feature type="helix" evidence="3">
    <location>
        <begin position="399"/>
        <end position="402"/>
    </location>
</feature>
<feature type="helix" evidence="3">
    <location>
        <begin position="403"/>
        <end position="405"/>
    </location>
</feature>
<feature type="helix" evidence="3">
    <location>
        <begin position="409"/>
        <end position="434"/>
    </location>
</feature>
<proteinExistence type="evidence at protein level"/>
<gene>
    <name evidence="1" type="primary">mntH</name>
    <name type="ordered locus">DR_1709</name>
</gene>